<accession>O97529</accession>
<organism>
    <name type="scientific">Oryctolagus cuniculus</name>
    <name type="common">Rabbit</name>
    <dbReference type="NCBI Taxonomy" id="9986"/>
    <lineage>
        <taxon>Eukaryota</taxon>
        <taxon>Metazoa</taxon>
        <taxon>Chordata</taxon>
        <taxon>Craniata</taxon>
        <taxon>Vertebrata</taxon>
        <taxon>Euteleostomi</taxon>
        <taxon>Mammalia</taxon>
        <taxon>Eutheria</taxon>
        <taxon>Euarchontoglires</taxon>
        <taxon>Glires</taxon>
        <taxon>Lagomorpha</taxon>
        <taxon>Leporidae</taxon>
        <taxon>Oryctolagus</taxon>
    </lineage>
</organism>
<gene>
    <name type="primary">ANXA8</name>
</gene>
<protein>
    <recommendedName>
        <fullName>Annexin A8</fullName>
    </recommendedName>
    <alternativeName>
        <fullName>Annexin VIII</fullName>
    </alternativeName>
    <alternativeName>
        <fullName>Annexin-8</fullName>
    </alternativeName>
</protein>
<keyword id="KW-0041">Annexin</keyword>
<keyword id="KW-0094">Blood coagulation</keyword>
<keyword id="KW-0106">Calcium</keyword>
<keyword id="KW-0111">Calcium/phospholipid-binding</keyword>
<keyword id="KW-0356">Hemostasis</keyword>
<keyword id="KW-0479">Metal-binding</keyword>
<keyword id="KW-1185">Reference proteome</keyword>
<keyword id="KW-0677">Repeat</keyword>
<sequence length="327" mass="36680">MAWWKAWVEQEGVTVKGSPHFNPVPDAETLYKAMKGIGTNEQAIIDVLTRRSSAQRQQIAKSFKAQFGSDLTETLKSELSGKFERLIVALMYPPYRYEAKELHDAMKGLGTKEGVIIEILASRTKNQLQEIMKAYEEDYGSSLEEDIQADTSGYLERILVCLLQGSRDDVTGFVDPGLALQDAQDLYAAGEKICGTDEMKFITILCTRSARHLMRVFEEYEKIANKSIEDSIKSETHGSLEEAMLTIVKCTRNLHCYFAERLHYAMKGAGTLDGTLIRNIVSRSEIDLNLIKGHYKKMYGKTLSSMIMEDTSGDYKNALLSLVGSDP</sequence>
<proteinExistence type="evidence at transcript level"/>
<dbReference type="EMBL" id="AF012745">
    <property type="protein sequence ID" value="AAD01508.1"/>
    <property type="molecule type" value="mRNA"/>
</dbReference>
<dbReference type="RefSeq" id="NP_001075488.1">
    <property type="nucleotide sequence ID" value="NM_001082019.1"/>
</dbReference>
<dbReference type="SMR" id="O97529"/>
<dbReference type="FunCoup" id="O97529">
    <property type="interactions" value="18"/>
</dbReference>
<dbReference type="STRING" id="9986.ENSOCUP00000012199"/>
<dbReference type="PaxDb" id="9986-ENSOCUP00000012199"/>
<dbReference type="GeneID" id="100008655"/>
<dbReference type="KEGG" id="ocu:100008655"/>
<dbReference type="CTD" id="653145"/>
<dbReference type="eggNOG" id="KOG0819">
    <property type="taxonomic scope" value="Eukaryota"/>
</dbReference>
<dbReference type="InParanoid" id="O97529"/>
<dbReference type="OrthoDB" id="37886at2759"/>
<dbReference type="Proteomes" id="UP000001811">
    <property type="component" value="Unplaced"/>
</dbReference>
<dbReference type="GO" id="GO:0005737">
    <property type="term" value="C:cytoplasm"/>
    <property type="evidence" value="ECO:0007669"/>
    <property type="project" value="TreeGrafter"/>
</dbReference>
<dbReference type="GO" id="GO:0005634">
    <property type="term" value="C:nucleus"/>
    <property type="evidence" value="ECO:0007669"/>
    <property type="project" value="TreeGrafter"/>
</dbReference>
<dbReference type="GO" id="GO:0005886">
    <property type="term" value="C:plasma membrane"/>
    <property type="evidence" value="ECO:0007669"/>
    <property type="project" value="TreeGrafter"/>
</dbReference>
<dbReference type="GO" id="GO:0012506">
    <property type="term" value="C:vesicle membrane"/>
    <property type="evidence" value="ECO:0007669"/>
    <property type="project" value="TreeGrafter"/>
</dbReference>
<dbReference type="GO" id="GO:0005509">
    <property type="term" value="F:calcium ion binding"/>
    <property type="evidence" value="ECO:0007669"/>
    <property type="project" value="InterPro"/>
</dbReference>
<dbReference type="GO" id="GO:0005544">
    <property type="term" value="F:calcium-dependent phospholipid binding"/>
    <property type="evidence" value="ECO:0007669"/>
    <property type="project" value="UniProtKB-KW"/>
</dbReference>
<dbReference type="GO" id="GO:0001786">
    <property type="term" value="F:phosphatidylserine binding"/>
    <property type="evidence" value="ECO:0007669"/>
    <property type="project" value="TreeGrafter"/>
</dbReference>
<dbReference type="GO" id="GO:0007596">
    <property type="term" value="P:blood coagulation"/>
    <property type="evidence" value="ECO:0007669"/>
    <property type="project" value="UniProtKB-KW"/>
</dbReference>
<dbReference type="GO" id="GO:0016197">
    <property type="term" value="P:endosomal transport"/>
    <property type="evidence" value="ECO:0007669"/>
    <property type="project" value="TreeGrafter"/>
</dbReference>
<dbReference type="GO" id="GO:0007032">
    <property type="term" value="P:endosome organization"/>
    <property type="evidence" value="ECO:0007669"/>
    <property type="project" value="TreeGrafter"/>
</dbReference>
<dbReference type="FunFam" id="1.10.220.10:FF:000001">
    <property type="entry name" value="Annexin"/>
    <property type="match status" value="1"/>
</dbReference>
<dbReference type="FunFam" id="1.10.220.10:FF:000002">
    <property type="entry name" value="Annexin"/>
    <property type="match status" value="1"/>
</dbReference>
<dbReference type="FunFam" id="1.10.220.10:FF:000003">
    <property type="entry name" value="Annexin"/>
    <property type="match status" value="1"/>
</dbReference>
<dbReference type="FunFam" id="1.10.220.10:FF:000004">
    <property type="entry name" value="Annexin"/>
    <property type="match status" value="1"/>
</dbReference>
<dbReference type="Gene3D" id="1.10.220.10">
    <property type="entry name" value="Annexin"/>
    <property type="match status" value="4"/>
</dbReference>
<dbReference type="InterPro" id="IPR001464">
    <property type="entry name" value="Annexin"/>
</dbReference>
<dbReference type="InterPro" id="IPR018502">
    <property type="entry name" value="Annexin_repeat"/>
</dbReference>
<dbReference type="InterPro" id="IPR018252">
    <property type="entry name" value="Annexin_repeat_CS"/>
</dbReference>
<dbReference type="InterPro" id="IPR037104">
    <property type="entry name" value="Annexin_sf"/>
</dbReference>
<dbReference type="InterPro" id="IPR009115">
    <property type="entry name" value="ANX8"/>
</dbReference>
<dbReference type="PANTHER" id="PTHR10502">
    <property type="entry name" value="ANNEXIN"/>
    <property type="match status" value="1"/>
</dbReference>
<dbReference type="PANTHER" id="PTHR10502:SF133">
    <property type="entry name" value="ANNEXIN A8-RELATED"/>
    <property type="match status" value="1"/>
</dbReference>
<dbReference type="Pfam" id="PF00191">
    <property type="entry name" value="Annexin"/>
    <property type="match status" value="4"/>
</dbReference>
<dbReference type="PRINTS" id="PR00196">
    <property type="entry name" value="ANNEXIN"/>
</dbReference>
<dbReference type="PRINTS" id="PR01808">
    <property type="entry name" value="ANNEXINVIII"/>
</dbReference>
<dbReference type="SMART" id="SM00335">
    <property type="entry name" value="ANX"/>
    <property type="match status" value="4"/>
</dbReference>
<dbReference type="SUPFAM" id="SSF47874">
    <property type="entry name" value="Annexin"/>
    <property type="match status" value="1"/>
</dbReference>
<dbReference type="PROSITE" id="PS00223">
    <property type="entry name" value="ANNEXIN_1"/>
    <property type="match status" value="4"/>
</dbReference>
<dbReference type="PROSITE" id="PS51897">
    <property type="entry name" value="ANNEXIN_2"/>
    <property type="match status" value="4"/>
</dbReference>
<evidence type="ECO:0000250" key="1"/>
<evidence type="ECO:0000255" key="2">
    <source>
        <dbReference type="PROSITE-ProRule" id="PRU01245"/>
    </source>
</evidence>
<evidence type="ECO:0000305" key="3"/>
<reference key="1">
    <citation type="submission" date="1997-07" db="EMBL/GenBank/DDBJ databases">
        <authorList>
            <person name="Cheng W."/>
            <person name="Tsao F.H.C."/>
        </authorList>
    </citation>
    <scope>NUCLEOTIDE SEQUENCE [MRNA]</scope>
</reference>
<comment type="function">
    <text evidence="1">This protein is an anticoagulant protein that acts as an indirect inhibitor of the thromboplastin-specific complex, which is involved in the blood coagulation cascade.</text>
</comment>
<comment type="domain">
    <text evidence="1">A pair of annexin repeats may form one binding site for calcium and phospholipid.</text>
</comment>
<comment type="similarity">
    <text evidence="2 3">Belongs to the annexin family.</text>
</comment>
<name>ANXA8_RABIT</name>
<feature type="chain" id="PRO_0000231029" description="Annexin A8">
    <location>
        <begin position="1"/>
        <end position="327"/>
    </location>
</feature>
<feature type="repeat" description="Annexin 1" evidence="2">
    <location>
        <begin position="21"/>
        <end position="92"/>
    </location>
</feature>
<feature type="repeat" description="Annexin 2" evidence="2">
    <location>
        <begin position="93"/>
        <end position="164"/>
    </location>
</feature>
<feature type="repeat" description="Annexin 3" evidence="2">
    <location>
        <begin position="177"/>
        <end position="249"/>
    </location>
</feature>
<feature type="repeat" description="Annexin 4" evidence="2">
    <location>
        <begin position="253"/>
        <end position="324"/>
    </location>
</feature>
<feature type="binding site" evidence="1">
    <location>
        <position position="266"/>
    </location>
    <ligand>
        <name>Ca(2+)</name>
        <dbReference type="ChEBI" id="CHEBI:29108"/>
    </ligand>
</feature>
<feature type="binding site" evidence="1">
    <location>
        <position position="268"/>
    </location>
    <ligand>
        <name>Ca(2+)</name>
        <dbReference type="ChEBI" id="CHEBI:29108"/>
    </ligand>
</feature>
<feature type="binding site" evidence="1">
    <location>
        <position position="270"/>
    </location>
    <ligand>
        <name>Ca(2+)</name>
        <dbReference type="ChEBI" id="CHEBI:29108"/>
    </ligand>
</feature>
<feature type="binding site" evidence="1">
    <location>
        <position position="310"/>
    </location>
    <ligand>
        <name>Ca(2+)</name>
        <dbReference type="ChEBI" id="CHEBI:29108"/>
    </ligand>
</feature>